<sequence length="752" mass="82520">MSSRTVLAPGNDRNSDTHGTLGSGRSSDKGPSWSSRSLGARCRNSIASCPEEQPHVGNYRLLRTIGKGNFAKVKLARHILTGREVAIKIIDKTQLNPSSLQKLFREVRIMKGLNHPNIVKLFEVIETEKTLYLVMEYASAGEVFDYLVSHGRMKEKEARAKFRQIVSAVHYCHQKNIVHRDLKAENLLLDAEANIKIADFGFSNEFTLGSKLDTFCGSPPYAAPELFQGKKYDGPEVDIWSLGVILYTLVSGSLPFDGHNLKELRERVLRGKYRVPFYMSTDCESILRRFLVLNPAKRCTLEQIMKDKWINIGYEGEELKPYTEPEEDFGDTKRIEVMVGMGYTREEIKESLTSQKYNEVTATYLLLGRKTEEGGDRGAPGLALARVRAPSDTTNGTSSSKGTSHSKGQRSSSSTYHRQRRHSDFCGPSPAPLHPKRSPTSTGEAELKEERLPGRKASCSTAGSGSRGLPPSSPMVSSAHNPNKAEIPERRKDSTSTPNNLPPSMMTRRNTYVCTERPGAERPSLLPNGKENSSGTPRVPPASPSSHSLAPPSGERSRLARGSTIRSTFHGGQVRDRRAGGGGGGGVQNGPPASPTLAHEAAPLPAGRPRPTTNLFTKLTSKLTRRVADEPERIGGPEVTSCHLPWDQTETAPRLLRFPWSVKLTSSRPPEALMAALRQATAAARCRCRQPQPFLLACLHGGAGGPEPLSHFEVEVCQLPRPGLRGVLFRRVAGTALAFRTLVTRISNDLEL</sequence>
<proteinExistence type="evidence at protein level"/>
<gene>
    <name evidence="21 23" type="primary">MARK4</name>
    <name evidence="20" type="synonym">KIAA1860</name>
    <name evidence="19" type="synonym">MARKL1</name>
</gene>
<keyword id="KW-0002">3D-structure</keyword>
<keyword id="KW-0025">Alternative splicing</keyword>
<keyword id="KW-0067">ATP-binding</keyword>
<keyword id="KW-0131">Cell cycle</keyword>
<keyword id="KW-0132">Cell division</keyword>
<keyword id="KW-0966">Cell projection</keyword>
<keyword id="KW-0970">Cilium biogenesis/degradation</keyword>
<keyword id="KW-0963">Cytoplasm</keyword>
<keyword id="KW-0206">Cytoskeleton</keyword>
<keyword id="KW-0418">Kinase</keyword>
<keyword id="KW-0498">Mitosis</keyword>
<keyword id="KW-0547">Nucleotide-binding</keyword>
<keyword id="KW-0597">Phosphoprotein</keyword>
<keyword id="KW-1267">Proteomics identification</keyword>
<keyword id="KW-1185">Reference proteome</keyword>
<keyword id="KW-0723">Serine/threonine-protein kinase</keyword>
<keyword id="KW-0808">Transferase</keyword>
<keyword id="KW-0832">Ubl conjugation</keyword>
<organism>
    <name type="scientific">Homo sapiens</name>
    <name type="common">Human</name>
    <dbReference type="NCBI Taxonomy" id="9606"/>
    <lineage>
        <taxon>Eukaryota</taxon>
        <taxon>Metazoa</taxon>
        <taxon>Chordata</taxon>
        <taxon>Craniata</taxon>
        <taxon>Vertebrata</taxon>
        <taxon>Euteleostomi</taxon>
        <taxon>Mammalia</taxon>
        <taxon>Eutheria</taxon>
        <taxon>Euarchontoglires</taxon>
        <taxon>Primates</taxon>
        <taxon>Haplorrhini</taxon>
        <taxon>Catarrhini</taxon>
        <taxon>Hominidae</taxon>
        <taxon>Homo</taxon>
    </lineage>
</organism>
<comment type="function">
    <text evidence="1 8 10 14 15 16 17 18">Serine/threonine-protein kinase (PubMed:14594945, PubMed:15009667, PubMed:23184942, PubMed:23666762). Phosphorylates the microtubule-associated protein MAPT/TAU (PubMed:14594945, PubMed:23666762). Also phosphorylates the microtubule-associated proteins MAP2 and MAP4 (PubMed:14594945). Involved in regulation of the microtubule network, causing reorganization of microtubules into bundles (PubMed:14594945, PubMed:25123532). Required for the initiation of axoneme extension during cilium assembly (PubMed:23400999). Regulates the centrosomal location of ODF2 and phosphorylates ODF2 in vitro (PubMed:23400999). Plays a role in cell cycle progression, specifically in the G1/S checkpoint (PubMed:25123532). Reduces neuronal cell survival (PubMed:15009667). Plays a role in energy homeostasis by regulating satiety and metabolic rate (By similarity). Promotes adipogenesis by activating JNK1 and inhibiting the p38MAPK pathway, and triggers apoptosis by activating the JNK1 pathway (By similarity). Phosphorylates mTORC1 complex member RPTOR and acts as a negative regulator of the mTORC1 complex, probably due to disruption of the interaction between phosphorylated RPTOR and the RRAGA/RRAGC heterodimer which is required for mTORC1 activation (PubMed:23184942). Involved in NLRP3 positioning along microtubules by mediating NLRP3 recruitment to microtubule organizing center (MTOC) upon inflammasome activation (PubMed:28656979).</text>
</comment>
<comment type="catalytic activity">
    <reaction evidence="8 10 14">
        <text>L-seryl-[protein] + ATP = O-phospho-L-seryl-[protein] + ADP + H(+)</text>
        <dbReference type="Rhea" id="RHEA:17989"/>
        <dbReference type="Rhea" id="RHEA-COMP:9863"/>
        <dbReference type="Rhea" id="RHEA-COMP:11604"/>
        <dbReference type="ChEBI" id="CHEBI:15378"/>
        <dbReference type="ChEBI" id="CHEBI:29999"/>
        <dbReference type="ChEBI" id="CHEBI:30616"/>
        <dbReference type="ChEBI" id="CHEBI:83421"/>
        <dbReference type="ChEBI" id="CHEBI:456216"/>
        <dbReference type="EC" id="2.7.11.1"/>
    </reaction>
</comment>
<comment type="catalytic activity">
    <reaction evidence="8 10 14">
        <text>L-threonyl-[protein] + ATP = O-phospho-L-threonyl-[protein] + ADP + H(+)</text>
        <dbReference type="Rhea" id="RHEA:46608"/>
        <dbReference type="Rhea" id="RHEA-COMP:11060"/>
        <dbReference type="Rhea" id="RHEA-COMP:11605"/>
        <dbReference type="ChEBI" id="CHEBI:15378"/>
        <dbReference type="ChEBI" id="CHEBI:30013"/>
        <dbReference type="ChEBI" id="CHEBI:30616"/>
        <dbReference type="ChEBI" id="CHEBI:61977"/>
        <dbReference type="ChEBI" id="CHEBI:456216"/>
        <dbReference type="EC" id="2.7.11.1"/>
    </reaction>
</comment>
<comment type="cofactor">
    <cofactor evidence="8">
        <name>Mg(2+)</name>
        <dbReference type="ChEBI" id="CHEBI:18420"/>
    </cofactor>
</comment>
<comment type="activity regulation">
    <text evidence="9">Activated by phosphorylation on Thr-214.</text>
</comment>
<comment type="subunit">
    <text evidence="8 11 13 15 16 18">Interacts with MAPT/TAU (PubMed:23666762). Interacts with gamma-tubulin (PubMed:14594945). Interacts with ODF2 (PubMed:23400999). Interacts with USP9X (PubMed:18254724). Interacts with YWHAQ (PubMed:16959763). Interacts with NLRP3; promoting NLRP3 recruitment to microtubule organizing center (MTOC) (PubMed:28656979).</text>
</comment>
<comment type="interaction">
    <interactant intactId="EBI-302319">
        <id>Q96L34</id>
    </interactant>
    <interactant intactId="EBI-25646567">
        <id>Q06481-5</id>
        <label>APLP2</label>
    </interactant>
    <organismsDiffer>false</organismsDiffer>
    <experiments>3</experiments>
</comment>
<comment type="interaction">
    <interactant intactId="EBI-302319">
        <id>Q96L34</id>
    </interactant>
    <interactant intactId="EBI-77613">
        <id>P05067</id>
        <label>APP</label>
    </interactant>
    <organismsDiffer>false</organismsDiffer>
    <experiments>3</experiments>
</comment>
<comment type="interaction">
    <interactant intactId="EBI-302319">
        <id>Q96L34</id>
    </interactant>
    <interactant intactId="EBI-81752">
        <id>P60953</id>
        <label>CDC42</label>
    </interactant>
    <organismsDiffer>false</organismsDiffer>
    <experiments>2</experiments>
</comment>
<comment type="interaction">
    <interactant intactId="EBI-302319">
        <id>Q96L34</id>
    </interactant>
    <interactant intactId="EBI-9087876">
        <id>P48730-2</id>
        <label>CSNK1D</label>
    </interactant>
    <organismsDiffer>false</organismsDiffer>
    <experiments>3</experiments>
</comment>
<comment type="interaction">
    <interactant intactId="EBI-302319">
        <id>Q96L34</id>
    </interactant>
    <interactant intactId="EBI-948001">
        <id>Q15323</id>
        <label>KRT31</label>
    </interactant>
    <organismsDiffer>false</organismsDiffer>
    <experiments>3</experiments>
</comment>
<comment type="interaction">
    <interactant intactId="EBI-302319">
        <id>Q96L34</id>
    </interactant>
    <interactant intactId="EBI-79452">
        <id>P07948</id>
        <label>LYN</label>
    </interactant>
    <organismsDiffer>false</organismsDiffer>
    <experiments>3</experiments>
</comment>
<comment type="interaction">
    <interactant intactId="EBI-302319">
        <id>Q96L34</id>
    </interactant>
    <interactant intactId="EBI-295417">
        <id>Q9BYG4</id>
        <label>PARD6G</label>
    </interactant>
    <organismsDiffer>false</organismsDiffer>
    <experiments>2</experiments>
</comment>
<comment type="interaction">
    <interactant intactId="EBI-302319">
        <id>Q96L34</id>
    </interactant>
    <interactant intactId="EBI-302345">
        <id>Q8ND90</id>
        <label>PNMA1</label>
    </interactant>
    <organismsDiffer>false</organismsDiffer>
    <experiments>2</experiments>
</comment>
<comment type="interaction">
    <interactant intactId="EBI-302319">
        <id>Q96L34</id>
    </interactant>
    <interactant intactId="EBI-286199">
        <id>P41743</id>
        <label>PRKCI</label>
    </interactant>
    <organismsDiffer>false</organismsDiffer>
    <experiments>2</experiments>
</comment>
<comment type="interaction">
    <interactant intactId="EBI-302319">
        <id>Q96L34</id>
    </interactant>
    <interactant intactId="EBI-306838">
        <id>Q15831</id>
        <label>STK11</label>
    </interactant>
    <organismsDiffer>false</organismsDiffer>
    <experiments>2</experiments>
</comment>
<comment type="interaction">
    <interactant intactId="EBI-302319">
        <id>Q96L34</id>
    </interactant>
    <interactant intactId="EBI-302589">
        <id>P23258</id>
        <label>TUBG1</label>
    </interactant>
    <organismsDiffer>false</organismsDiffer>
    <experiments>4</experiments>
</comment>
<comment type="interaction">
    <interactant intactId="EBI-302319">
        <id>Q96L34</id>
    </interactant>
    <interactant intactId="EBI-306940">
        <id>Q04917</id>
        <label>YWHAH</label>
    </interactant>
    <organismsDiffer>false</organismsDiffer>
    <experiments>7</experiments>
</comment>
<comment type="subcellular location">
    <subcellularLocation>
        <location evidence="8">Cytoplasm</location>
        <location evidence="8">Cytoskeleton</location>
        <location evidence="8">Microtubule organizing center</location>
        <location evidence="8">Centrosome</location>
    </subcellularLocation>
    <subcellularLocation>
        <location evidence="8 18">Cytoplasm</location>
        <location evidence="8 18">Cytoskeleton</location>
        <location evidence="8 18">Microtubule organizing center</location>
    </subcellularLocation>
    <subcellularLocation>
        <location evidence="15">Cytoplasm</location>
        <location evidence="15">Cytoskeleton</location>
        <location evidence="15">Cilium basal body</location>
    </subcellularLocation>
    <subcellularLocation>
        <location evidence="15">Cytoplasm</location>
        <location evidence="15">Cytoskeleton</location>
        <location evidence="15">Cilium axoneme</location>
    </subcellularLocation>
    <subcellularLocation>
        <location evidence="15 16">Cytoplasm</location>
    </subcellularLocation>
    <subcellularLocation>
        <location evidence="16">Cell projection</location>
        <location evidence="16">Dendrite</location>
    </subcellularLocation>
    <text evidence="8 16">Localized at the tips of neurite-like processes in differentiated neuroblast cells. Detected in the cytoplasm and neuropil of the hippocampus.</text>
</comment>
<comment type="alternative products">
    <event type="alternative splicing"/>
    <isoform>
        <id>Q96L34-1</id>
        <name>1</name>
        <name>MARK4L</name>
        <sequence type="displayed"/>
    </isoform>
    <isoform>
        <id>Q96L34-2</id>
        <name>2</name>
        <name>MARKL1S</name>
        <name>MARK4S</name>
        <sequence type="described" ref="VSP_004946"/>
    </isoform>
</comment>
<comment type="tissue specificity">
    <text evidence="7 8">Ubiquitous. Isoform 2 is brain-specific (PubMed:11326310). Expressed at highest levels in brain and testis. Also expressed in heart, lung, liver, muscle, kidney and spleen (PubMed:14594945).</text>
</comment>
<comment type="developmental stage">
    <text evidence="17">Expressed at all stages of the mitotic cell cycle.</text>
</comment>
<comment type="PTM">
    <text evidence="9 13">Ubiquitinated with 'Lys-29'- and 'Lys-33'-linked polyubiquitins which appear to impede LKB1-mediated phosphorylation. Deubiquitinated by USP9X.</text>
</comment>
<comment type="PTM">
    <text evidence="9 17">Phosphorylated at Thr-214 by STK11/LKB1 in complex with STE20-related adapter-alpha (STRADA) pseudo kinase and CAB39 (PubMed:14976552). Phosphorylated throughout the cell cycle (PubMed:25123532).</text>
</comment>
<comment type="similarity">
    <text evidence="22">Belongs to the protein kinase superfamily. CAMK Ser/Thr protein kinase family. SNF1 subfamily.</text>
</comment>
<comment type="sequence caution" evidence="22">
    <conflict type="erroneous initiation">
        <sequence resource="EMBL-CDS" id="BAB47489"/>
    </conflict>
    <text>Truncated N-terminus.</text>
</comment>
<comment type="sequence caution" evidence="22">
    <conflict type="erroneous initiation">
        <sequence resource="EMBL-CDS" id="BAB55238"/>
    </conflict>
    <text>Extended N-terminus.</text>
</comment>
<comment type="online information" name="Atlas of Genetics and Cytogenetics in Oncology and Haematology">
    <link uri="https://atlasgeneticsoncology.org/gene/419/MARK4"/>
</comment>
<dbReference type="EC" id="2.7.11.1" evidence="8 10 14"/>
<dbReference type="EMBL" id="AB049127">
    <property type="protein sequence ID" value="BAB39380.1"/>
    <property type="molecule type" value="mRNA"/>
</dbReference>
<dbReference type="EMBL" id="AB088047">
    <property type="protein sequence ID" value="BAC03375.1"/>
    <property type="molecule type" value="mRNA"/>
</dbReference>
<dbReference type="EMBL" id="AY057448">
    <property type="protein sequence ID" value="AAL23683.1"/>
    <property type="molecule type" value="mRNA"/>
</dbReference>
<dbReference type="EMBL" id="AX305105">
    <property type="status" value="NOT_ANNOTATED_CDS"/>
    <property type="molecule type" value="mRNA"/>
</dbReference>
<dbReference type="EMBL" id="AX305106">
    <property type="status" value="NOT_ANNOTATED_CDS"/>
    <property type="molecule type" value="mRNA"/>
</dbReference>
<dbReference type="EMBL" id="AY120867">
    <property type="protein sequence ID" value="AAM55491.1"/>
    <property type="molecule type" value="mRNA"/>
</dbReference>
<dbReference type="EMBL" id="AB058763">
    <property type="protein sequence ID" value="BAB47489.1"/>
    <property type="status" value="ALT_INIT"/>
    <property type="molecule type" value="mRNA"/>
</dbReference>
<dbReference type="EMBL" id="AK027619">
    <property type="protein sequence ID" value="BAB55238.1"/>
    <property type="status" value="ALT_INIT"/>
    <property type="molecule type" value="mRNA"/>
</dbReference>
<dbReference type="EMBL" id="AK075272">
    <property type="protein sequence ID" value="BAC11510.1"/>
    <property type="molecule type" value="mRNA"/>
</dbReference>
<dbReference type="CCDS" id="CCDS12658.1">
    <molecule id="Q96L34-2"/>
</dbReference>
<dbReference type="CCDS" id="CCDS56097.1">
    <molecule id="Q96L34-1"/>
</dbReference>
<dbReference type="RefSeq" id="NP_001186796.1">
    <molecule id="Q96L34-1"/>
    <property type="nucleotide sequence ID" value="NM_001199867.2"/>
</dbReference>
<dbReference type="RefSeq" id="NP_113605.2">
    <molecule id="Q96L34-2"/>
    <property type="nucleotide sequence ID" value="NM_031417.3"/>
</dbReference>
<dbReference type="PDB" id="5ES1">
    <property type="method" value="X-ray"/>
    <property type="resolution" value="2.80 A"/>
    <property type="chains" value="A=44-370"/>
</dbReference>
<dbReference type="PDB" id="8XFL">
    <property type="method" value="X-ray"/>
    <property type="resolution" value="3.00 A"/>
    <property type="chains" value="A/B=44-370"/>
</dbReference>
<dbReference type="PDBsum" id="5ES1"/>
<dbReference type="PDBsum" id="8XFL"/>
<dbReference type="SMR" id="Q96L34"/>
<dbReference type="BioGRID" id="121760">
    <property type="interactions" value="74"/>
</dbReference>
<dbReference type="FunCoup" id="Q96L34">
    <property type="interactions" value="1008"/>
</dbReference>
<dbReference type="IntAct" id="Q96L34">
    <property type="interactions" value="50"/>
</dbReference>
<dbReference type="MINT" id="Q96L34"/>
<dbReference type="STRING" id="9606.ENSP00000262891"/>
<dbReference type="BindingDB" id="Q96L34"/>
<dbReference type="ChEMBL" id="CHEMBL5754"/>
<dbReference type="DrugBank" id="DB12010">
    <property type="generic name" value="Fostamatinib"/>
</dbReference>
<dbReference type="DrugCentral" id="Q96L34"/>
<dbReference type="GuidetoPHARMACOLOGY" id="2100"/>
<dbReference type="GlyGen" id="Q96L34">
    <property type="glycosylation" value="1 site, 1 O-linked glycan (1 site)"/>
</dbReference>
<dbReference type="iPTMnet" id="Q96L34"/>
<dbReference type="PhosphoSitePlus" id="Q96L34"/>
<dbReference type="BioMuta" id="MARK4"/>
<dbReference type="DMDM" id="29840797"/>
<dbReference type="CPTAC" id="non-CPTAC-5644"/>
<dbReference type="jPOST" id="Q96L34"/>
<dbReference type="MassIVE" id="Q96L34"/>
<dbReference type="PaxDb" id="9606-ENSP00000262891"/>
<dbReference type="PeptideAtlas" id="Q96L34"/>
<dbReference type="ProteomicsDB" id="77145">
    <molecule id="Q96L34-1"/>
</dbReference>
<dbReference type="ProteomicsDB" id="77146">
    <molecule id="Q96L34-2"/>
</dbReference>
<dbReference type="Pumba" id="Q96L34"/>
<dbReference type="Antibodypedia" id="31285">
    <property type="antibodies" value="373 antibodies from 36 providers"/>
</dbReference>
<dbReference type="DNASU" id="57787"/>
<dbReference type="Ensembl" id="ENST00000262891.9">
    <molecule id="Q96L34-1"/>
    <property type="protein sequence ID" value="ENSP00000262891.3"/>
    <property type="gene ID" value="ENSG00000007047.16"/>
</dbReference>
<dbReference type="Ensembl" id="ENST00000300843.8">
    <molecule id="Q96L34-2"/>
    <property type="protein sequence ID" value="ENSP00000300843.3"/>
    <property type="gene ID" value="ENSG00000007047.16"/>
</dbReference>
<dbReference type="GeneID" id="57787"/>
<dbReference type="KEGG" id="hsa:57787"/>
<dbReference type="MANE-Select" id="ENST00000262891.9">
    <property type="protein sequence ID" value="ENSP00000262891.3"/>
    <property type="RefSeq nucleotide sequence ID" value="NM_001199867.2"/>
    <property type="RefSeq protein sequence ID" value="NP_001186796.1"/>
</dbReference>
<dbReference type="UCSC" id="uc002pba.3">
    <molecule id="Q96L34-1"/>
    <property type="organism name" value="human"/>
</dbReference>
<dbReference type="AGR" id="HGNC:13538"/>
<dbReference type="CTD" id="57787"/>
<dbReference type="DisGeNET" id="57787"/>
<dbReference type="GeneCards" id="MARK4"/>
<dbReference type="HGNC" id="HGNC:13538">
    <property type="gene designation" value="MARK4"/>
</dbReference>
<dbReference type="HPA" id="ENSG00000007047">
    <property type="expression patterns" value="Low tissue specificity"/>
</dbReference>
<dbReference type="MalaCards" id="MARK4"/>
<dbReference type="MIM" id="606495">
    <property type="type" value="gene"/>
</dbReference>
<dbReference type="neXtProt" id="NX_Q96L34"/>
<dbReference type="OpenTargets" id="ENSG00000007047"/>
<dbReference type="PharmGKB" id="PA30641"/>
<dbReference type="VEuPathDB" id="HostDB:ENSG00000007047"/>
<dbReference type="eggNOG" id="KOG0586">
    <property type="taxonomic scope" value="Eukaryota"/>
</dbReference>
<dbReference type="GeneTree" id="ENSGT00940000159555"/>
<dbReference type="HOGENOM" id="CLU_000288_157_5_1"/>
<dbReference type="InParanoid" id="Q96L34"/>
<dbReference type="OMA" id="CHLPWDK"/>
<dbReference type="OrthoDB" id="193931at2759"/>
<dbReference type="PAN-GO" id="Q96L34">
    <property type="GO annotations" value="5 GO annotations based on evolutionary models"/>
</dbReference>
<dbReference type="PhylomeDB" id="Q96L34"/>
<dbReference type="TreeFam" id="TF315213"/>
<dbReference type="PathwayCommons" id="Q96L34"/>
<dbReference type="Reactome" id="R-HSA-5620912">
    <property type="pathway name" value="Anchoring of the basal body to the plasma membrane"/>
</dbReference>
<dbReference type="SignaLink" id="Q96L34"/>
<dbReference type="SIGNOR" id="Q96L34"/>
<dbReference type="BioGRID-ORCS" id="57787">
    <property type="hits" value="12 hits in 1188 CRISPR screens"/>
</dbReference>
<dbReference type="CD-CODE" id="8C2F96ED">
    <property type="entry name" value="Centrosome"/>
</dbReference>
<dbReference type="ChiTaRS" id="MARK4">
    <property type="organism name" value="human"/>
</dbReference>
<dbReference type="EvolutionaryTrace" id="Q96L34"/>
<dbReference type="GeneWiki" id="MARK4"/>
<dbReference type="GenomeRNAi" id="57787"/>
<dbReference type="Pharos" id="Q96L34">
    <property type="development level" value="Tchem"/>
</dbReference>
<dbReference type="PRO" id="PR:Q96L34"/>
<dbReference type="Proteomes" id="UP000005640">
    <property type="component" value="Chromosome 19"/>
</dbReference>
<dbReference type="RNAct" id="Q96L34">
    <property type="molecule type" value="protein"/>
</dbReference>
<dbReference type="Bgee" id="ENSG00000007047">
    <property type="expression patterns" value="Expressed in cortical plate and 200 other cell types or tissues"/>
</dbReference>
<dbReference type="ExpressionAtlas" id="Q96L34">
    <property type="expression patterns" value="baseline and differential"/>
</dbReference>
<dbReference type="GO" id="GO:0005813">
    <property type="term" value="C:centrosome"/>
    <property type="evidence" value="ECO:0000314"/>
    <property type="project" value="UniProtKB"/>
</dbReference>
<dbReference type="GO" id="GO:0036064">
    <property type="term" value="C:ciliary basal body"/>
    <property type="evidence" value="ECO:0000315"/>
    <property type="project" value="CACAO"/>
</dbReference>
<dbReference type="GO" id="GO:0005737">
    <property type="term" value="C:cytoplasm"/>
    <property type="evidence" value="ECO:0000314"/>
    <property type="project" value="UniProtKB"/>
</dbReference>
<dbReference type="GO" id="GO:0005829">
    <property type="term" value="C:cytosol"/>
    <property type="evidence" value="ECO:0000314"/>
    <property type="project" value="HPA"/>
</dbReference>
<dbReference type="GO" id="GO:0030425">
    <property type="term" value="C:dendrite"/>
    <property type="evidence" value="ECO:0000314"/>
    <property type="project" value="UniProtKB"/>
</dbReference>
<dbReference type="GO" id="GO:0000930">
    <property type="term" value="C:gamma-tubulin complex"/>
    <property type="evidence" value="ECO:0000314"/>
    <property type="project" value="ARUK-UCL"/>
</dbReference>
<dbReference type="GO" id="GO:0015630">
    <property type="term" value="C:microtubule cytoskeleton"/>
    <property type="evidence" value="ECO:0000314"/>
    <property type="project" value="UniProtKB"/>
</dbReference>
<dbReference type="GO" id="GO:0005815">
    <property type="term" value="C:microtubule organizing center"/>
    <property type="evidence" value="ECO:0000314"/>
    <property type="project" value="UniProtKB"/>
</dbReference>
<dbReference type="GO" id="GO:0030496">
    <property type="term" value="C:midbody"/>
    <property type="evidence" value="ECO:0000314"/>
    <property type="project" value="ARUK-UCL"/>
</dbReference>
<dbReference type="GO" id="GO:0043005">
    <property type="term" value="C:neuron projection"/>
    <property type="evidence" value="ECO:0000314"/>
    <property type="project" value="UniProtKB"/>
</dbReference>
<dbReference type="GO" id="GO:0005524">
    <property type="term" value="F:ATP binding"/>
    <property type="evidence" value="ECO:0000303"/>
    <property type="project" value="UniProtKB"/>
</dbReference>
<dbReference type="GO" id="GO:0008093">
    <property type="term" value="F:cytoskeletal anchor activity"/>
    <property type="evidence" value="ECO:0000314"/>
    <property type="project" value="UniProtKB"/>
</dbReference>
<dbReference type="GO" id="GO:0043015">
    <property type="term" value="F:gamma-tubulin binding"/>
    <property type="evidence" value="ECO:0000314"/>
    <property type="project" value="UniProtKB"/>
</dbReference>
<dbReference type="GO" id="GO:0008017">
    <property type="term" value="F:microtubule binding"/>
    <property type="evidence" value="ECO:0000314"/>
    <property type="project" value="UniProtKB"/>
</dbReference>
<dbReference type="GO" id="GO:0106310">
    <property type="term" value="F:protein serine kinase activity"/>
    <property type="evidence" value="ECO:0007669"/>
    <property type="project" value="RHEA"/>
</dbReference>
<dbReference type="GO" id="GO:0004674">
    <property type="term" value="F:protein serine/threonine kinase activity"/>
    <property type="evidence" value="ECO:0000314"/>
    <property type="project" value="UniProtKB"/>
</dbReference>
<dbReference type="GO" id="GO:0048156">
    <property type="term" value="F:tau protein binding"/>
    <property type="evidence" value="ECO:0000303"/>
    <property type="project" value="ARUK-UCL"/>
</dbReference>
<dbReference type="GO" id="GO:0050321">
    <property type="term" value="F:tau-protein kinase activity"/>
    <property type="evidence" value="ECO:0000314"/>
    <property type="project" value="UniProtKB"/>
</dbReference>
<dbReference type="GO" id="GO:0043130">
    <property type="term" value="F:ubiquitin binding"/>
    <property type="evidence" value="ECO:0000303"/>
    <property type="project" value="UniProtKB"/>
</dbReference>
<dbReference type="GO" id="GO:0051301">
    <property type="term" value="P:cell division"/>
    <property type="evidence" value="ECO:0007669"/>
    <property type="project" value="UniProtKB-KW"/>
</dbReference>
<dbReference type="GO" id="GO:0044782">
    <property type="term" value="P:cilium organization"/>
    <property type="evidence" value="ECO:0000316"/>
    <property type="project" value="ARUK-UCL"/>
</dbReference>
<dbReference type="GO" id="GO:0035556">
    <property type="term" value="P:intracellular signal transduction"/>
    <property type="evidence" value="ECO:0000318"/>
    <property type="project" value="GO_Central"/>
</dbReference>
<dbReference type="GO" id="GO:0001578">
    <property type="term" value="P:microtubule bundle formation"/>
    <property type="evidence" value="ECO:0000270"/>
    <property type="project" value="UniProtKB"/>
</dbReference>
<dbReference type="GO" id="GO:0000226">
    <property type="term" value="P:microtubule cytoskeleton organization"/>
    <property type="evidence" value="ECO:0000315"/>
    <property type="project" value="UniProtKB"/>
</dbReference>
<dbReference type="GO" id="GO:0007399">
    <property type="term" value="P:nervous system development"/>
    <property type="evidence" value="ECO:0000314"/>
    <property type="project" value="UniProtKB"/>
</dbReference>
<dbReference type="GO" id="GO:0045787">
    <property type="term" value="P:positive regulation of cell cycle"/>
    <property type="evidence" value="ECO:0000314"/>
    <property type="project" value="ARUK-UCL"/>
</dbReference>
<dbReference type="GO" id="GO:0045724">
    <property type="term" value="P:positive regulation of cilium assembly"/>
    <property type="evidence" value="ECO:0000315"/>
    <property type="project" value="ARUK-UCL"/>
</dbReference>
<dbReference type="GO" id="GO:1900227">
    <property type="term" value="P:positive regulation of NLRP3 inflammasome complex assembly"/>
    <property type="evidence" value="ECO:0000314"/>
    <property type="project" value="UniProtKB"/>
</dbReference>
<dbReference type="GO" id="GO:0043068">
    <property type="term" value="P:positive regulation of programmed cell death"/>
    <property type="evidence" value="ECO:0000303"/>
    <property type="project" value="UniProtKB"/>
</dbReference>
<dbReference type="GO" id="GO:1904781">
    <property type="term" value="P:positive regulation of protein localization to centrosome"/>
    <property type="evidence" value="ECO:0000315"/>
    <property type="project" value="ARUK-UCL"/>
</dbReference>
<dbReference type="GO" id="GO:0006468">
    <property type="term" value="P:protein phosphorylation"/>
    <property type="evidence" value="ECO:0000315"/>
    <property type="project" value="UniProtKB"/>
</dbReference>
<dbReference type="GO" id="GO:0046605">
    <property type="term" value="P:regulation of centrosome cycle"/>
    <property type="evidence" value="ECO:0000315"/>
    <property type="project" value="ARUK-UCL"/>
</dbReference>
<dbReference type="CDD" id="cd12197">
    <property type="entry name" value="MARK4_C"/>
    <property type="match status" value="1"/>
</dbReference>
<dbReference type="CDD" id="cd14072">
    <property type="entry name" value="STKc_MARK"/>
    <property type="match status" value="1"/>
</dbReference>
<dbReference type="CDD" id="cd14407">
    <property type="entry name" value="UBA_MARK3_4"/>
    <property type="match status" value="1"/>
</dbReference>
<dbReference type="FunFam" id="1.10.510.10:FF:001032">
    <property type="entry name" value="KP78b, isoform A"/>
    <property type="match status" value="1"/>
</dbReference>
<dbReference type="FunFam" id="1.10.8.10:FF:000011">
    <property type="entry name" value="Non-specific serine/threonine protein kinase"/>
    <property type="match status" value="1"/>
</dbReference>
<dbReference type="FunFam" id="3.30.200.20:FF:000003">
    <property type="entry name" value="Non-specific serine/threonine protein kinase"/>
    <property type="match status" value="1"/>
</dbReference>
<dbReference type="FunFam" id="3.30.310.80:FF:000009">
    <property type="entry name" value="Non-specific serine/threonine protein kinase"/>
    <property type="match status" value="1"/>
</dbReference>
<dbReference type="Gene3D" id="1.10.8.10">
    <property type="entry name" value="DNA helicase RuvA subunit, C-terminal domain"/>
    <property type="match status" value="1"/>
</dbReference>
<dbReference type="Gene3D" id="3.30.310.80">
    <property type="entry name" value="Kinase associated domain 1, KA1"/>
    <property type="match status" value="1"/>
</dbReference>
<dbReference type="Gene3D" id="3.30.200.20">
    <property type="entry name" value="Phosphorylase Kinase, domain 1"/>
    <property type="match status" value="1"/>
</dbReference>
<dbReference type="Gene3D" id="1.10.510.10">
    <property type="entry name" value="Transferase(Phosphotransferase) domain 1"/>
    <property type="match status" value="1"/>
</dbReference>
<dbReference type="InterPro" id="IPR028375">
    <property type="entry name" value="KA1/Ssp2_C"/>
</dbReference>
<dbReference type="InterPro" id="IPR001772">
    <property type="entry name" value="KA1_dom"/>
</dbReference>
<dbReference type="InterPro" id="IPR011009">
    <property type="entry name" value="Kinase-like_dom_sf"/>
</dbReference>
<dbReference type="InterPro" id="IPR049508">
    <property type="entry name" value="MARK1-4_cat"/>
</dbReference>
<dbReference type="InterPro" id="IPR000719">
    <property type="entry name" value="Prot_kinase_dom"/>
</dbReference>
<dbReference type="InterPro" id="IPR017441">
    <property type="entry name" value="Protein_kinase_ATP_BS"/>
</dbReference>
<dbReference type="InterPro" id="IPR008271">
    <property type="entry name" value="Ser/Thr_kinase_AS"/>
</dbReference>
<dbReference type="InterPro" id="IPR015940">
    <property type="entry name" value="UBA"/>
</dbReference>
<dbReference type="PANTHER" id="PTHR24346">
    <property type="entry name" value="MAP/MICROTUBULE AFFINITY-REGULATING KINASE"/>
    <property type="match status" value="1"/>
</dbReference>
<dbReference type="PANTHER" id="PTHR24346:SF28">
    <property type="entry name" value="MAP_MICROTUBULE AFFINITY-REGULATING KINASE 4"/>
    <property type="match status" value="1"/>
</dbReference>
<dbReference type="Pfam" id="PF02149">
    <property type="entry name" value="KA1"/>
    <property type="match status" value="1"/>
</dbReference>
<dbReference type="Pfam" id="PF00069">
    <property type="entry name" value="Pkinase"/>
    <property type="match status" value="1"/>
</dbReference>
<dbReference type="Pfam" id="PF00627">
    <property type="entry name" value="UBA"/>
    <property type="match status" value="1"/>
</dbReference>
<dbReference type="SMART" id="SM00220">
    <property type="entry name" value="S_TKc"/>
    <property type="match status" value="1"/>
</dbReference>
<dbReference type="SMART" id="SM00165">
    <property type="entry name" value="UBA"/>
    <property type="match status" value="1"/>
</dbReference>
<dbReference type="SUPFAM" id="SSF103243">
    <property type="entry name" value="KA1-like"/>
    <property type="match status" value="1"/>
</dbReference>
<dbReference type="SUPFAM" id="SSF56112">
    <property type="entry name" value="Protein kinase-like (PK-like)"/>
    <property type="match status" value="1"/>
</dbReference>
<dbReference type="PROSITE" id="PS50032">
    <property type="entry name" value="KA1"/>
    <property type="match status" value="1"/>
</dbReference>
<dbReference type="PROSITE" id="PS00107">
    <property type="entry name" value="PROTEIN_KINASE_ATP"/>
    <property type="match status" value="1"/>
</dbReference>
<dbReference type="PROSITE" id="PS50011">
    <property type="entry name" value="PROTEIN_KINASE_DOM"/>
    <property type="match status" value="1"/>
</dbReference>
<dbReference type="PROSITE" id="PS00108">
    <property type="entry name" value="PROTEIN_KINASE_ST"/>
    <property type="match status" value="1"/>
</dbReference>
<dbReference type="PROSITE" id="PS50030">
    <property type="entry name" value="UBA"/>
    <property type="match status" value="1"/>
</dbReference>
<reference key="1">
    <citation type="journal article" date="2001" name="Neoplasia">
        <title>Isolation of a novel human gene, MARKL1, homologous to MARK3 and its involvement in hepatocellular carcinogenesis.</title>
        <authorList>
            <person name="Kato T."/>
            <person name="Satoh S."/>
            <person name="Okabe H."/>
            <person name="Kitahara O."/>
            <person name="Ono K."/>
            <person name="Kihara C."/>
            <person name="Tanaka T."/>
            <person name="Tsunoda T."/>
            <person name="Yamaoka Y."/>
            <person name="Nakamura Y."/>
            <person name="Furukawa Y."/>
        </authorList>
    </citation>
    <scope>NUCLEOTIDE SEQUENCE [MRNA] (ISOFORMS 1 AND 2)</scope>
    <scope>TISSUE SPECIFICITY</scope>
    <source>
        <tissue>Brain</tissue>
    </source>
</reference>
<reference key="2">
    <citation type="journal article" date="2004" name="J. Biol. Chem.">
        <title>MARK4 is a novel microtubule-associated proteins/microtubule affinity-regulating kinase that binds to the cellular microtubule network and to centrosomes.</title>
        <authorList>
            <person name="Trinczek B."/>
            <person name="Brajenovic M."/>
            <person name="Ebneth A."/>
            <person name="Drewes G."/>
        </authorList>
    </citation>
    <scope>NUCLEOTIDE SEQUENCE [MRNA] (ISOFORM 1)</scope>
    <scope>FUNCTION</scope>
    <scope>CATALYTIC ACTIVITY</scope>
    <scope>COFACTOR</scope>
    <scope>INTERACTION WITH GAMMA-TUBULIN</scope>
    <scope>SUBCELLULAR LOCATION</scope>
    <scope>TISSUE SPECIFICITY</scope>
</reference>
<reference key="3">
    <citation type="journal article" date="2004" name="J. Neurochem.">
        <title>Identification of regulated genes during permanent focal cerebral ischaemia: characterization of the protein kinase 9b5/MARKL1/MARK4.</title>
        <authorList>
            <person name="Schneider A."/>
            <person name="Laage R."/>
            <person name="von Ahsen O."/>
            <person name="Fischer A."/>
            <person name="Rossner M."/>
            <person name="Scheek S."/>
            <person name="Grunewald S."/>
            <person name="Kuner R."/>
            <person name="Weber D."/>
            <person name="Kruger C."/>
            <person name="Klaussner B."/>
            <person name="Gotz B."/>
            <person name="Hiemisch H."/>
            <person name="Newrzella D."/>
            <person name="Martin-Villalba A."/>
            <person name="Bach A."/>
            <person name="Schwaninger M."/>
        </authorList>
    </citation>
    <scope>NUCLEOTIDE SEQUENCE [MRNA] (ISOFORMS 1 AND 2)</scope>
    <scope>FUNCTION</scope>
    <scope>CATALYTIC ACTIVITY</scope>
</reference>
<reference key="4">
    <citation type="submission" date="2002-06" db="EMBL/GenBank/DDBJ databases">
        <title>Neural progenitor-restricted isoform of MARKL1 gene is upregulated by 19q13 amplification in human glioblastoma.</title>
        <authorList>
            <person name="Beghini A."/>
            <person name="Magnani I."/>
            <person name="Roversi G."/>
            <person name="Piepoli T."/>
            <person name="DiTerlizzi S."/>
            <person name="Pollo B."/>
            <person name="Conti A.M.F."/>
            <person name="Cowell J.K."/>
            <person name="Finocchiaro G."/>
            <person name="Larizza L."/>
        </authorList>
    </citation>
    <scope>NUCLEOTIDE SEQUENCE [MRNA] (ISOFORM 1)</scope>
    <source>
        <tissue>Brain</tissue>
    </source>
</reference>
<reference key="5">
    <citation type="journal article" date="2001" name="DNA Res.">
        <title>Prediction of the coding sequences of unidentified human genes. XX. The complete sequences of 100 new cDNA clones from brain which code for large proteins in vitro.</title>
        <authorList>
            <person name="Nagase T."/>
            <person name="Nakayama M."/>
            <person name="Nakajima D."/>
            <person name="Kikuno R."/>
            <person name="Ohara O."/>
        </authorList>
    </citation>
    <scope>NUCLEOTIDE SEQUENCE [LARGE SCALE MRNA] (ISOFORM 2)</scope>
    <source>
        <tissue>Brain</tissue>
    </source>
</reference>
<reference key="6">
    <citation type="journal article" date="2004" name="Nat. Genet.">
        <title>Complete sequencing and characterization of 21,243 full-length human cDNAs.</title>
        <authorList>
            <person name="Ota T."/>
            <person name="Suzuki Y."/>
            <person name="Nishikawa T."/>
            <person name="Otsuki T."/>
            <person name="Sugiyama T."/>
            <person name="Irie R."/>
            <person name="Wakamatsu A."/>
            <person name="Hayashi K."/>
            <person name="Sato H."/>
            <person name="Nagai K."/>
            <person name="Kimura K."/>
            <person name="Makita H."/>
            <person name="Sekine M."/>
            <person name="Obayashi M."/>
            <person name="Nishi T."/>
            <person name="Shibahara T."/>
            <person name="Tanaka T."/>
            <person name="Ishii S."/>
            <person name="Yamamoto J."/>
            <person name="Saito K."/>
            <person name="Kawai Y."/>
            <person name="Isono Y."/>
            <person name="Nakamura Y."/>
            <person name="Nagahari K."/>
            <person name="Murakami K."/>
            <person name="Yasuda T."/>
            <person name="Iwayanagi T."/>
            <person name="Wagatsuma M."/>
            <person name="Shiratori A."/>
            <person name="Sudo H."/>
            <person name="Hosoiri T."/>
            <person name="Kaku Y."/>
            <person name="Kodaira H."/>
            <person name="Kondo H."/>
            <person name="Sugawara M."/>
            <person name="Takahashi M."/>
            <person name="Kanda K."/>
            <person name="Yokoi T."/>
            <person name="Furuya T."/>
            <person name="Kikkawa E."/>
            <person name="Omura Y."/>
            <person name="Abe K."/>
            <person name="Kamihara K."/>
            <person name="Katsuta N."/>
            <person name="Sato K."/>
            <person name="Tanikawa M."/>
            <person name="Yamazaki M."/>
            <person name="Ninomiya K."/>
            <person name="Ishibashi T."/>
            <person name="Yamashita H."/>
            <person name="Murakawa K."/>
            <person name="Fujimori K."/>
            <person name="Tanai H."/>
            <person name="Kimata M."/>
            <person name="Watanabe M."/>
            <person name="Hiraoka S."/>
            <person name="Chiba Y."/>
            <person name="Ishida S."/>
            <person name="Ono Y."/>
            <person name="Takiguchi S."/>
            <person name="Watanabe S."/>
            <person name="Yosida M."/>
            <person name="Hotuta T."/>
            <person name="Kusano J."/>
            <person name="Kanehori K."/>
            <person name="Takahashi-Fujii A."/>
            <person name="Hara H."/>
            <person name="Tanase T.-O."/>
            <person name="Nomura Y."/>
            <person name="Togiya S."/>
            <person name="Komai F."/>
            <person name="Hara R."/>
            <person name="Takeuchi K."/>
            <person name="Arita M."/>
            <person name="Imose N."/>
            <person name="Musashino K."/>
            <person name="Yuuki H."/>
            <person name="Oshima A."/>
            <person name="Sasaki N."/>
            <person name="Aotsuka S."/>
            <person name="Yoshikawa Y."/>
            <person name="Matsunawa H."/>
            <person name="Ichihara T."/>
            <person name="Shiohata N."/>
            <person name="Sano S."/>
            <person name="Moriya S."/>
            <person name="Momiyama H."/>
            <person name="Satoh N."/>
            <person name="Takami S."/>
            <person name="Terashima Y."/>
            <person name="Suzuki O."/>
            <person name="Nakagawa S."/>
            <person name="Senoh A."/>
            <person name="Mizoguchi H."/>
            <person name="Goto Y."/>
            <person name="Shimizu F."/>
            <person name="Wakebe H."/>
            <person name="Hishigaki H."/>
            <person name="Watanabe T."/>
            <person name="Sugiyama A."/>
            <person name="Takemoto M."/>
            <person name="Kawakami B."/>
            <person name="Yamazaki M."/>
            <person name="Watanabe K."/>
            <person name="Kumagai A."/>
            <person name="Itakura S."/>
            <person name="Fukuzumi Y."/>
            <person name="Fujimori Y."/>
            <person name="Komiyama M."/>
            <person name="Tashiro H."/>
            <person name="Tanigami A."/>
            <person name="Fujiwara T."/>
            <person name="Ono T."/>
            <person name="Yamada K."/>
            <person name="Fujii Y."/>
            <person name="Ozaki K."/>
            <person name="Hirao M."/>
            <person name="Ohmori Y."/>
            <person name="Kawabata A."/>
            <person name="Hikiji T."/>
            <person name="Kobatake N."/>
            <person name="Inagaki H."/>
            <person name="Ikema Y."/>
            <person name="Okamoto S."/>
            <person name="Okitani R."/>
            <person name="Kawakami T."/>
            <person name="Noguchi S."/>
            <person name="Itoh T."/>
            <person name="Shigeta K."/>
            <person name="Senba T."/>
            <person name="Matsumura K."/>
            <person name="Nakajima Y."/>
            <person name="Mizuno T."/>
            <person name="Morinaga M."/>
            <person name="Sasaki M."/>
            <person name="Togashi T."/>
            <person name="Oyama M."/>
            <person name="Hata H."/>
            <person name="Watanabe M."/>
            <person name="Komatsu T."/>
            <person name="Mizushima-Sugano J."/>
            <person name="Satoh T."/>
            <person name="Shirai Y."/>
            <person name="Takahashi Y."/>
            <person name="Nakagawa K."/>
            <person name="Okumura K."/>
            <person name="Nagase T."/>
            <person name="Nomura N."/>
            <person name="Kikuchi H."/>
            <person name="Masuho Y."/>
            <person name="Yamashita R."/>
            <person name="Nakai K."/>
            <person name="Yada T."/>
            <person name="Nakamura Y."/>
            <person name="Ohara O."/>
            <person name="Isogai T."/>
            <person name="Sugano S."/>
        </authorList>
    </citation>
    <scope>NUCLEOTIDE SEQUENCE [LARGE SCALE MRNA] (ISOFORM 1)</scope>
    <source>
        <tissue>Thyroid</tissue>
    </source>
</reference>
<reference key="7">
    <citation type="journal article" date="2004" name="EMBO J.">
        <title>LKB1 is a master kinase that activates 13 kinases of the AMPK subfamily, including MARK/PAR-1.</title>
        <authorList>
            <person name="Lizcano J.M."/>
            <person name="Goeransson O."/>
            <person name="Toth R."/>
            <person name="Deak M."/>
            <person name="Morrice N.A."/>
            <person name="Boudeau J."/>
            <person name="Hawley S.A."/>
            <person name="Udd L."/>
            <person name="Maekelae T.P."/>
            <person name="Hardie D.G."/>
            <person name="Alessi D.R."/>
        </authorList>
    </citation>
    <scope>ACTIVITY REGULATION</scope>
    <scope>PHOSPHORYLATION AT THR-214</scope>
    <scope>MUTAGENESIS OF THR-214</scope>
</reference>
<reference key="8">
    <citation type="journal article" date="2006" name="Mol. Cell. Proteomics">
        <title>Transgenic mouse proteomics identifies new 14-3-3-associated proteins involved in cytoskeletal rearrangements and cell signaling.</title>
        <authorList>
            <person name="Angrand P.O."/>
            <person name="Segura I."/>
            <person name="Voelkel P."/>
            <person name="Ghidelli S."/>
            <person name="Terry R."/>
            <person name="Brajenovic M."/>
            <person name="Vintersten K."/>
            <person name="Klein R."/>
            <person name="Superti-Furga G."/>
            <person name="Drewes G."/>
            <person name="Kuster B."/>
            <person name="Bouwmeester T."/>
            <person name="Acker-Palmer A."/>
        </authorList>
    </citation>
    <scope>INTERACTION WITH YWHAQ</scope>
</reference>
<reference key="9">
    <citation type="journal article" date="2008" name="Biochem. J.">
        <title>Control of AMPK-related kinases by USP9X and atypical Lys(29)/Lys(33)-linked polyubiquitin chains.</title>
        <authorList>
            <person name="Al-Hakim A.K."/>
            <person name="Zagorska A."/>
            <person name="Chapman L."/>
            <person name="Deak M."/>
            <person name="Peggie M."/>
            <person name="Alessi D.R."/>
        </authorList>
    </citation>
    <scope>UBIQUITINATION</scope>
    <scope>DEUBIQUITINATION BY USP9X</scope>
    <scope>INTERACTION WITH USP9X</scope>
</reference>
<reference key="10">
    <citation type="journal article" date="2009" name="Mol. Cell. Proteomics">
        <title>Large-scale proteomics analysis of the human kinome.</title>
        <authorList>
            <person name="Oppermann F.S."/>
            <person name="Gnad F."/>
            <person name="Olsen J.V."/>
            <person name="Hornberger R."/>
            <person name="Greff Z."/>
            <person name="Keri G."/>
            <person name="Mann M."/>
            <person name="Daub H."/>
        </authorList>
    </citation>
    <scope>IDENTIFICATION BY MASS SPECTROMETRY [LARGE SCALE ANALYSIS]</scope>
</reference>
<reference key="11">
    <citation type="journal article" date="2013" name="J. Biol. Chem.">
        <title>Microtubule-associated protein/microtubule affinity-regulating kinase 4 (MARK4) is a negative regulator of the mammalian target of rapamycin complex 1 (mTORC1).</title>
        <authorList>
            <person name="Li L."/>
            <person name="Guan K.L."/>
        </authorList>
    </citation>
    <scope>FUNCTION</scope>
    <scope>CATALYTIC ACTIVITY</scope>
    <scope>MUTAGENESIS OF THR-214</scope>
</reference>
<reference key="12">
    <citation type="journal article" date="2013" name="J. Cell Biol.">
        <title>The microtubule affinity regulating kinase MARK4 promotes axoneme extension during early ciliogenesis.</title>
        <authorList>
            <person name="Kuhns S."/>
            <person name="Schmidt K.N."/>
            <person name="Reymann J."/>
            <person name="Gilbert D.F."/>
            <person name="Neuner A."/>
            <person name="Hub B."/>
            <person name="Carvalho R."/>
            <person name="Wiedemann P."/>
            <person name="Zentgraf H."/>
            <person name="Erfle H."/>
            <person name="Klingmuller U."/>
            <person name="Boutros M."/>
            <person name="Pereira G."/>
        </authorList>
    </citation>
    <scope>FUNCTION</scope>
    <scope>INTERACTION WITH ODF2</scope>
    <scope>SUBCELLULAR LOCATION</scope>
</reference>
<reference key="13">
    <citation type="journal article" date="2013" name="J. Proteome Res.">
        <title>Toward a comprehensive characterization of a human cancer cell phosphoproteome.</title>
        <authorList>
            <person name="Zhou H."/>
            <person name="Di Palma S."/>
            <person name="Preisinger C."/>
            <person name="Peng M."/>
            <person name="Polat A.N."/>
            <person name="Heck A.J."/>
            <person name="Mohammed S."/>
        </authorList>
    </citation>
    <scope>PHOSPHORYLATION [LARGE SCALE ANALYSIS] AT SER-543</scope>
    <scope>IDENTIFICATION BY MASS SPECTROMETRY [LARGE SCALE ANALYSIS]</scope>
    <source>
        <tissue>Erythroleukemia</tissue>
    </source>
</reference>
<reference key="14">
    <citation type="journal article" date="2013" name="NeuroMolecular Med.">
        <title>Role of individual MARK isoforms in phosphorylation of tau at Ser262 in Alzheimer's disease.</title>
        <authorList>
            <person name="Gu G.J."/>
            <person name="Lund H."/>
            <person name="Wu D."/>
            <person name="Blokzijl A."/>
            <person name="Classon C."/>
            <person name="von Euler G."/>
            <person name="Landegren U."/>
            <person name="Sunnemark D."/>
            <person name="Kamali-Moghaddam M."/>
        </authorList>
    </citation>
    <scope>FUNCTION</scope>
    <scope>INTERACTION WITH MAPT</scope>
    <scope>SUBCELLULAR LOCATION</scope>
</reference>
<reference key="15">
    <citation type="journal article" date="2014" name="Eur. J. Cell Biol.">
        <title>Microtubule-associated protein/microtubule affinity-regulating kinase 4 (MARK4) plays a role in cell cycle progression and cytoskeletal dynamics.</title>
        <authorList>
            <person name="Rovina D."/>
            <person name="Fontana L."/>
            <person name="Monti L."/>
            <person name="Novielli C."/>
            <person name="Panini N."/>
            <person name="Sirchia S.M."/>
            <person name="Erba E."/>
            <person name="Magnani I."/>
            <person name="Larizza L."/>
        </authorList>
    </citation>
    <scope>FUNCTION</scope>
    <scope>DEVELOPMENTAL STAGE</scope>
    <scope>PHOSPHORYLATION</scope>
</reference>
<reference key="16">
    <citation type="journal article" date="2017" name="Nat. Commun.">
        <title>MARK4 regulates NLRP3 positioning and inflammasome activation through a microtubule-dependent mechanism.</title>
        <authorList>
            <person name="Li X."/>
            <person name="Thome S."/>
            <person name="Ma X."/>
            <person name="Amrute-Nayak M."/>
            <person name="Finigan A."/>
            <person name="Kitt L."/>
            <person name="Masters L."/>
            <person name="James J.R."/>
            <person name="Shi Y."/>
            <person name="Meng G."/>
            <person name="Mallat Z."/>
        </authorList>
    </citation>
    <scope>FUNCTION</scope>
    <scope>SUBCELLULAR LOCATION</scope>
    <scope>INTERACTION WITH NLRP3</scope>
</reference>
<reference key="17">
    <citation type="journal article" date="2007" name="Nature">
        <title>Patterns of somatic mutation in human cancer genomes.</title>
        <authorList>
            <person name="Greenman C."/>
            <person name="Stephens P."/>
            <person name="Smith R."/>
            <person name="Dalgliesh G.L."/>
            <person name="Hunter C."/>
            <person name="Bignell G."/>
            <person name="Davies H."/>
            <person name="Teague J."/>
            <person name="Butler A."/>
            <person name="Stevens C."/>
            <person name="Edkins S."/>
            <person name="O'Meara S."/>
            <person name="Vastrik I."/>
            <person name="Schmidt E.E."/>
            <person name="Avis T."/>
            <person name="Barthorpe S."/>
            <person name="Bhamra G."/>
            <person name="Buck G."/>
            <person name="Choudhury B."/>
            <person name="Clements J."/>
            <person name="Cole J."/>
            <person name="Dicks E."/>
            <person name="Forbes S."/>
            <person name="Gray K."/>
            <person name="Halliday K."/>
            <person name="Harrison R."/>
            <person name="Hills K."/>
            <person name="Hinton J."/>
            <person name="Jenkinson A."/>
            <person name="Jones D."/>
            <person name="Menzies A."/>
            <person name="Mironenko T."/>
            <person name="Perry J."/>
            <person name="Raine K."/>
            <person name="Richardson D."/>
            <person name="Shepherd R."/>
            <person name="Small A."/>
            <person name="Tofts C."/>
            <person name="Varian J."/>
            <person name="Webb T."/>
            <person name="West S."/>
            <person name="Widaa S."/>
            <person name="Yates A."/>
            <person name="Cahill D.P."/>
            <person name="Louis D.N."/>
            <person name="Goldstraw P."/>
            <person name="Nicholson A.G."/>
            <person name="Brasseur F."/>
            <person name="Looijenga L."/>
            <person name="Weber B.L."/>
            <person name="Chiew Y.-E."/>
            <person name="DeFazio A."/>
            <person name="Greaves M.F."/>
            <person name="Green A.R."/>
            <person name="Campbell P."/>
            <person name="Birney E."/>
            <person name="Easton D.F."/>
            <person name="Chenevix-Trench G."/>
            <person name="Tan M.-H."/>
            <person name="Khoo S.K."/>
            <person name="Teh B.T."/>
            <person name="Yuen S.T."/>
            <person name="Leung S.Y."/>
            <person name="Wooster R."/>
            <person name="Futreal P.A."/>
            <person name="Stratton M.R."/>
        </authorList>
    </citation>
    <scope>VARIANTS [LARGE SCALE ANALYSIS] GLN-377 AND CYS-418</scope>
</reference>
<protein>
    <recommendedName>
        <fullName evidence="22">MAP/microtubule affinity-regulating kinase 4</fullName>
        <ecNumber evidence="8 10 14">2.7.11.1</ecNumber>
    </recommendedName>
    <alternativeName>
        <fullName evidence="19">MAP/microtubule affinity-regulating kinase-like 1</fullName>
    </alternativeName>
</protein>
<feature type="chain" id="PRO_0000086307" description="MAP/microtubule affinity-regulating kinase 4">
    <location>
        <begin position="1"/>
        <end position="752"/>
    </location>
</feature>
<feature type="domain" description="Protein kinase" evidence="2">
    <location>
        <begin position="59"/>
        <end position="310"/>
    </location>
</feature>
<feature type="domain" description="UBA" evidence="3">
    <location>
        <begin position="324"/>
        <end position="368"/>
    </location>
</feature>
<feature type="domain" description="KA1" evidence="4">
    <location>
        <begin position="703"/>
        <end position="752"/>
    </location>
</feature>
<feature type="region of interest" description="Disordered" evidence="6">
    <location>
        <begin position="1"/>
        <end position="36"/>
    </location>
</feature>
<feature type="region of interest" description="Disordered" evidence="6">
    <location>
        <begin position="385"/>
        <end position="614"/>
    </location>
</feature>
<feature type="compositionally biased region" description="Low complexity" evidence="6">
    <location>
        <begin position="391"/>
        <end position="406"/>
    </location>
</feature>
<feature type="compositionally biased region" description="Low complexity" evidence="6">
    <location>
        <begin position="544"/>
        <end position="553"/>
    </location>
</feature>
<feature type="active site" description="Proton acceptor" evidence="2 5">
    <location>
        <position position="181"/>
    </location>
</feature>
<feature type="binding site" evidence="2">
    <location>
        <begin position="65"/>
        <end position="73"/>
    </location>
    <ligand>
        <name>ATP</name>
        <dbReference type="ChEBI" id="CHEBI:30616"/>
    </ligand>
</feature>
<feature type="binding site" evidence="2">
    <location>
        <position position="88"/>
    </location>
    <ligand>
        <name>ATP</name>
        <dbReference type="ChEBI" id="CHEBI:30616"/>
    </ligand>
</feature>
<feature type="modified residue" description="Phosphothreonine; by LKB1" evidence="9">
    <location>
        <position position="214"/>
    </location>
</feature>
<feature type="modified residue" description="Phosphoserine" evidence="1">
    <location>
        <position position="423"/>
    </location>
</feature>
<feature type="modified residue" description="Phosphoserine" evidence="24">
    <location>
        <position position="543"/>
    </location>
</feature>
<feature type="splice variant" id="VSP_004946" description="In isoform 2." evidence="19 20">
    <original>ADEPERIGGPEVTSCHLPWDQTETAPRLLRFPWSVKLTSSRPPEALMAALRQATAAARCRCRQPQPFLLACLHGGAGGPEPLSHFEVEVCQLPRPGLRGVLFRRVAGTALAFRTLVTRISNDLEL</original>
    <variation>TLDPSKRQNSNRCVSGASLPQGSKIRSQTNLRESGDLRSQVAIYLGIKRKPPPGCSDSPGV</variation>
    <location>
        <begin position="628"/>
        <end position="752"/>
    </location>
</feature>
<feature type="sequence variant" id="VAR_040766" description="In dbSNP:rs35070611." evidence="12">
    <original>R</original>
    <variation>Q</variation>
    <location>
        <position position="377"/>
    </location>
</feature>
<feature type="sequence variant" id="VAR_040767" description="In a colorectal adenocarcinoma sample; somatic mutation; dbSNP:rs780763668." evidence="12">
    <original>R</original>
    <variation>C</variation>
    <location>
        <position position="418"/>
    </location>
</feature>
<feature type="mutagenesis site" description="Prevents phosphorylation and activation by STK11/LKB1 complex." evidence="9">
    <original>T</original>
    <variation>A</variation>
    <location>
        <position position="214"/>
    </location>
</feature>
<feature type="mutagenesis site" description="Mimicks phosphorylation state, leading to increased activity. Decreases mTORC1 activity." evidence="9 14">
    <original>T</original>
    <variation>E</variation>
    <location>
        <position position="214"/>
    </location>
</feature>
<feature type="sequence conflict" description="In Ref. 1; BAB39380/BAC03375." evidence="22" ref="1">
    <original>F</original>
    <variation>S</variation>
    <location>
        <position position="70"/>
    </location>
</feature>
<feature type="sequence conflict" description="In Ref. 6; BAB55238." evidence="22" ref="6">
    <original>P</original>
    <variation>L</variation>
    <location>
        <position position="518"/>
    </location>
</feature>
<feature type="strand" evidence="25">
    <location>
        <begin position="59"/>
        <end position="67"/>
    </location>
</feature>
<feature type="strand" evidence="25">
    <location>
        <begin position="69"/>
        <end position="78"/>
    </location>
</feature>
<feature type="turn" evidence="25">
    <location>
        <begin position="79"/>
        <end position="81"/>
    </location>
</feature>
<feature type="strand" evidence="25">
    <location>
        <begin position="84"/>
        <end position="91"/>
    </location>
</feature>
<feature type="helix" evidence="25">
    <location>
        <begin position="92"/>
        <end position="94"/>
    </location>
</feature>
<feature type="helix" evidence="25">
    <location>
        <begin position="97"/>
        <end position="111"/>
    </location>
</feature>
<feature type="strand" evidence="25">
    <location>
        <begin position="121"/>
        <end position="126"/>
    </location>
</feature>
<feature type="strand" evidence="25">
    <location>
        <begin position="128"/>
        <end position="135"/>
    </location>
</feature>
<feature type="helix" evidence="25">
    <location>
        <begin position="143"/>
        <end position="150"/>
    </location>
</feature>
<feature type="helix" evidence="25">
    <location>
        <begin position="155"/>
        <end position="174"/>
    </location>
</feature>
<feature type="strand" evidence="25">
    <location>
        <begin position="186"/>
        <end position="189"/>
    </location>
</feature>
<feature type="strand" evidence="25">
    <location>
        <begin position="195"/>
        <end position="197"/>
    </location>
</feature>
<feature type="turn" evidence="25">
    <location>
        <begin position="219"/>
        <end position="221"/>
    </location>
</feature>
<feature type="helix" evidence="25">
    <location>
        <begin position="224"/>
        <end position="228"/>
    </location>
</feature>
<feature type="helix" evidence="25">
    <location>
        <begin position="235"/>
        <end position="251"/>
    </location>
</feature>
<feature type="helix" evidence="25">
    <location>
        <begin position="261"/>
        <end position="270"/>
    </location>
</feature>
<feature type="helix" evidence="25">
    <location>
        <begin position="281"/>
        <end position="290"/>
    </location>
</feature>
<feature type="turn" evidence="25">
    <location>
        <begin position="295"/>
        <end position="297"/>
    </location>
</feature>
<feature type="helix" evidence="25">
    <location>
        <begin position="301"/>
        <end position="304"/>
    </location>
</feature>
<feature type="helix" evidence="25">
    <location>
        <begin position="308"/>
        <end position="311"/>
    </location>
</feature>
<feature type="helix" evidence="25">
    <location>
        <begin position="332"/>
        <end position="339"/>
    </location>
</feature>
<feature type="turn" evidence="25">
    <location>
        <begin position="340"/>
        <end position="342"/>
    </location>
</feature>
<feature type="helix" evidence="25">
    <location>
        <begin position="345"/>
        <end position="352"/>
    </location>
</feature>
<feature type="turn" evidence="25">
    <location>
        <begin position="353"/>
        <end position="355"/>
    </location>
</feature>
<feature type="helix" evidence="25">
    <location>
        <begin position="359"/>
        <end position="366"/>
    </location>
</feature>
<feature type="turn" evidence="25">
    <location>
        <begin position="367"/>
        <end position="369"/>
    </location>
</feature>
<name>MARK4_HUMAN</name>
<evidence type="ECO:0000250" key="1">
    <source>
        <dbReference type="UniProtKB" id="Q8CIP4"/>
    </source>
</evidence>
<evidence type="ECO:0000255" key="2">
    <source>
        <dbReference type="PROSITE-ProRule" id="PRU00159"/>
    </source>
</evidence>
<evidence type="ECO:0000255" key="3">
    <source>
        <dbReference type="PROSITE-ProRule" id="PRU00212"/>
    </source>
</evidence>
<evidence type="ECO:0000255" key="4">
    <source>
        <dbReference type="PROSITE-ProRule" id="PRU00565"/>
    </source>
</evidence>
<evidence type="ECO:0000255" key="5">
    <source>
        <dbReference type="PROSITE-ProRule" id="PRU10027"/>
    </source>
</evidence>
<evidence type="ECO:0000256" key="6">
    <source>
        <dbReference type="SAM" id="MobiDB-lite"/>
    </source>
</evidence>
<evidence type="ECO:0000269" key="7">
    <source>
    </source>
</evidence>
<evidence type="ECO:0000269" key="8">
    <source>
    </source>
</evidence>
<evidence type="ECO:0000269" key="9">
    <source>
    </source>
</evidence>
<evidence type="ECO:0000269" key="10">
    <source>
    </source>
</evidence>
<evidence type="ECO:0000269" key="11">
    <source>
    </source>
</evidence>
<evidence type="ECO:0000269" key="12">
    <source>
    </source>
</evidence>
<evidence type="ECO:0000269" key="13">
    <source>
    </source>
</evidence>
<evidence type="ECO:0000269" key="14">
    <source>
    </source>
</evidence>
<evidence type="ECO:0000269" key="15">
    <source>
    </source>
</evidence>
<evidence type="ECO:0000269" key="16">
    <source>
    </source>
</evidence>
<evidence type="ECO:0000269" key="17">
    <source>
    </source>
</evidence>
<evidence type="ECO:0000269" key="18">
    <source>
    </source>
</evidence>
<evidence type="ECO:0000303" key="19">
    <source>
    </source>
</evidence>
<evidence type="ECO:0000303" key="20">
    <source>
    </source>
</evidence>
<evidence type="ECO:0000303" key="21">
    <source>
    </source>
</evidence>
<evidence type="ECO:0000305" key="22"/>
<evidence type="ECO:0000312" key="23">
    <source>
        <dbReference type="HGNC" id="HGNC:13538"/>
    </source>
</evidence>
<evidence type="ECO:0007744" key="24">
    <source>
    </source>
</evidence>
<evidence type="ECO:0007829" key="25">
    <source>
        <dbReference type="PDB" id="5ES1"/>
    </source>
</evidence>
<accession>Q96L34</accession>
<accession>Q8NG37</accession>
<accession>Q96JG7</accession>
<accession>Q96SQ2</accession>
<accession>Q9BYD8</accession>